<keyword id="KW-0025">Alternative splicing</keyword>
<keyword id="KW-0965">Cell junction</keyword>
<keyword id="KW-1003">Cell membrane</keyword>
<keyword id="KW-0472">Membrane</keyword>
<keyword id="KW-0539">Nucleus</keyword>
<keyword id="KW-0597">Phosphoprotein</keyword>
<keyword id="KW-1185">Reference proteome</keyword>
<keyword id="KW-0677">Repeat</keyword>
<keyword id="KW-0728">SH3 domain</keyword>
<keyword id="KW-0796">Tight junction</keyword>
<gene>
    <name evidence="2" type="primary">TJP2</name>
    <name evidence="10" type="synonym">ZO2</name>
</gene>
<proteinExistence type="evidence at protein level"/>
<evidence type="ECO:0000250" key="1"/>
<evidence type="ECO:0000250" key="2">
    <source>
        <dbReference type="UniProtKB" id="Q9UDY2"/>
    </source>
</evidence>
<evidence type="ECO:0000250" key="3">
    <source>
        <dbReference type="UniProtKB" id="Q9Z0U1"/>
    </source>
</evidence>
<evidence type="ECO:0000255" key="4">
    <source>
        <dbReference type="PROSITE-ProRule" id="PRU00100"/>
    </source>
</evidence>
<evidence type="ECO:0000255" key="5">
    <source>
        <dbReference type="PROSITE-ProRule" id="PRU00143"/>
    </source>
</evidence>
<evidence type="ECO:0000255" key="6">
    <source>
        <dbReference type="PROSITE-ProRule" id="PRU00192"/>
    </source>
</evidence>
<evidence type="ECO:0000256" key="7">
    <source>
        <dbReference type="SAM" id="MobiDB-lite"/>
    </source>
</evidence>
<evidence type="ECO:0000269" key="8">
    <source>
    </source>
</evidence>
<evidence type="ECO:0000269" key="9">
    <source>
    </source>
</evidence>
<evidence type="ECO:0000303" key="10">
    <source>
    </source>
</evidence>
<evidence type="ECO:0000305" key="11"/>
<accession>Q95168</accession>
<organism>
    <name type="scientific">Canis lupus familiaris</name>
    <name type="common">Dog</name>
    <name type="synonym">Canis familiaris</name>
    <dbReference type="NCBI Taxonomy" id="9615"/>
    <lineage>
        <taxon>Eukaryota</taxon>
        <taxon>Metazoa</taxon>
        <taxon>Chordata</taxon>
        <taxon>Craniata</taxon>
        <taxon>Vertebrata</taxon>
        <taxon>Euteleostomi</taxon>
        <taxon>Mammalia</taxon>
        <taxon>Eutheria</taxon>
        <taxon>Laurasiatheria</taxon>
        <taxon>Carnivora</taxon>
        <taxon>Caniformia</taxon>
        <taxon>Canidae</taxon>
        <taxon>Canis</taxon>
    </lineage>
</organism>
<protein>
    <recommendedName>
        <fullName evidence="2">Tight junction protein 2</fullName>
    </recommendedName>
    <alternativeName>
        <fullName evidence="10">Tight junction protein ZO-2</fullName>
    </alternativeName>
    <alternativeName>
        <fullName>Zona occludens protein 2</fullName>
    </alternativeName>
    <alternativeName>
        <fullName>Zonula occludens protein 2</fullName>
    </alternativeName>
</protein>
<feature type="chain" id="PRO_0000094542" description="Tight junction protein 2">
    <location>
        <begin position="1"/>
        <end position="1174"/>
    </location>
</feature>
<feature type="domain" description="PDZ 1" evidence="5">
    <location>
        <begin position="10"/>
        <end position="97"/>
    </location>
</feature>
<feature type="domain" description="PDZ 2" evidence="5">
    <location>
        <begin position="291"/>
        <end position="369"/>
    </location>
</feature>
<feature type="domain" description="PDZ 3" evidence="5">
    <location>
        <begin position="493"/>
        <end position="574"/>
    </location>
</feature>
<feature type="domain" description="SH3" evidence="6">
    <location>
        <begin position="588"/>
        <end position="653"/>
    </location>
</feature>
<feature type="domain" description="Guanylate kinase-like" evidence="4">
    <location>
        <begin position="679"/>
        <end position="860"/>
    </location>
</feature>
<feature type="region of interest" description="Disordered" evidence="7">
    <location>
        <begin position="125"/>
        <end position="290"/>
    </location>
</feature>
<feature type="region of interest" description="Disordered" evidence="7">
    <location>
        <begin position="391"/>
        <end position="430"/>
    </location>
</feature>
<feature type="region of interest" description="Disordered" evidence="7">
    <location>
        <begin position="456"/>
        <end position="490"/>
    </location>
</feature>
<feature type="region of interest" description="Disordered" evidence="7">
    <location>
        <begin position="904"/>
        <end position="1065"/>
    </location>
</feature>
<feature type="region of interest" description="Disordered" evidence="7">
    <location>
        <begin position="1100"/>
        <end position="1174"/>
    </location>
</feature>
<feature type="region of interest" description="Interaction with SCRIB" evidence="1">
    <location>
        <begin position="1172"/>
        <end position="1174"/>
    </location>
</feature>
<feature type="compositionally biased region" description="Basic and acidic residues" evidence="7">
    <location>
        <begin position="125"/>
        <end position="137"/>
    </location>
</feature>
<feature type="compositionally biased region" description="Basic and acidic residues" evidence="7">
    <location>
        <begin position="146"/>
        <end position="214"/>
    </location>
</feature>
<feature type="compositionally biased region" description="Basic and acidic residues" evidence="7">
    <location>
        <begin position="220"/>
        <end position="235"/>
    </location>
</feature>
<feature type="compositionally biased region" description="Basic and acidic residues" evidence="7">
    <location>
        <begin position="243"/>
        <end position="266"/>
    </location>
</feature>
<feature type="compositionally biased region" description="Basic and acidic residues" evidence="7">
    <location>
        <begin position="274"/>
        <end position="288"/>
    </location>
</feature>
<feature type="compositionally biased region" description="Basic and acidic residues" evidence="7">
    <location>
        <begin position="399"/>
        <end position="430"/>
    </location>
</feature>
<feature type="compositionally biased region" description="Basic and acidic residues" evidence="7">
    <location>
        <begin position="940"/>
        <end position="951"/>
    </location>
</feature>
<feature type="compositionally biased region" description="Basic and acidic residues" evidence="7">
    <location>
        <begin position="978"/>
        <end position="1000"/>
    </location>
</feature>
<feature type="compositionally biased region" description="Acidic residues" evidence="7">
    <location>
        <begin position="1044"/>
        <end position="1056"/>
    </location>
</feature>
<feature type="compositionally biased region" description="Basic and acidic residues" evidence="7">
    <location>
        <begin position="1150"/>
        <end position="1159"/>
    </location>
</feature>
<feature type="modified residue" description="Phosphoserine" evidence="2">
    <location>
        <position position="107"/>
    </location>
</feature>
<feature type="modified residue" description="Phosphoserine" evidence="2">
    <location>
        <position position="127"/>
    </location>
</feature>
<feature type="modified residue" description="Phosphoserine" evidence="2">
    <location>
        <position position="130"/>
    </location>
</feature>
<feature type="modified residue" description="Phosphoserine" evidence="3">
    <location>
        <position position="140"/>
    </location>
</feature>
<feature type="modified residue" description="Phosphoserine" evidence="2">
    <location>
        <position position="145"/>
    </location>
</feature>
<feature type="modified residue" description="Phosphoserine" evidence="2">
    <location>
        <position position="147"/>
    </location>
</feature>
<feature type="modified residue" description="Phosphoserine" evidence="2">
    <location>
        <position position="151"/>
    </location>
</feature>
<feature type="modified residue" description="Phosphoserine" evidence="2">
    <location>
        <position position="173"/>
    </location>
</feature>
<feature type="modified residue" description="Phosphoserine" evidence="2">
    <location>
        <position position="195"/>
    </location>
</feature>
<feature type="modified residue" description="Phosphoserine" evidence="2">
    <location>
        <position position="217"/>
    </location>
</feature>
<feature type="modified residue" description="Phosphoserine" evidence="2">
    <location>
        <position position="239"/>
    </location>
</feature>
<feature type="modified residue" description="Phosphoserine" evidence="2">
    <location>
        <position position="309"/>
    </location>
</feature>
<feature type="modified residue" description="Phosphoserine" evidence="3">
    <location>
        <position position="382"/>
    </location>
</feature>
<feature type="modified residue" description="Phosphoserine" evidence="2">
    <location>
        <position position="384"/>
    </location>
</feature>
<feature type="modified residue" description="Phosphoserine" evidence="2">
    <location>
        <position position="390"/>
    </location>
</feature>
<feature type="modified residue" description="Phosphoserine" evidence="2">
    <location>
        <position position="399"/>
    </location>
</feature>
<feature type="modified residue" description="Phosphoserine" evidence="2">
    <location>
        <position position="408"/>
    </location>
</feature>
<feature type="modified residue" description="Phosphoserine" evidence="2">
    <location>
        <position position="414"/>
    </location>
</feature>
<feature type="modified residue" description="Phosphoserine" evidence="2">
    <location>
        <position position="415"/>
    </location>
</feature>
<feature type="modified residue" description="Phosphothreonine" evidence="2">
    <location>
        <position position="439"/>
    </location>
</feature>
<feature type="modified residue" description="Phosphoserine" evidence="2">
    <location>
        <position position="483"/>
    </location>
</feature>
<feature type="modified residue" description="Phosphotyrosine" evidence="3">
    <location>
        <position position="558"/>
    </location>
</feature>
<feature type="modified residue" description="Phosphoserine" evidence="2">
    <location>
        <position position="686"/>
    </location>
</feature>
<feature type="modified residue" description="Phosphoserine" evidence="3">
    <location>
        <position position="886"/>
    </location>
</feature>
<feature type="modified residue" description="Phosphothreonine" evidence="3">
    <location>
        <position position="889"/>
    </location>
</feature>
<feature type="modified residue" description="Phosphoserine" evidence="2">
    <location>
        <position position="897"/>
    </location>
</feature>
<feature type="modified residue" description="Phosphoserine" evidence="2">
    <location>
        <position position="904"/>
    </location>
</feature>
<feature type="modified residue" description="Phosphothreonine" evidence="2">
    <location>
        <position position="909"/>
    </location>
</feature>
<feature type="modified residue" description="Phosphothreonine" evidence="2">
    <location>
        <position position="917"/>
    </location>
</feature>
<feature type="modified residue" description="Phosphoserine" evidence="2">
    <location>
        <position position="950"/>
    </location>
</feature>
<feature type="modified residue" description="Phosphoserine" evidence="2">
    <location>
        <position position="962"/>
    </location>
</feature>
<feature type="modified residue" description="Phosphoserine" evidence="2">
    <location>
        <position position="970"/>
    </location>
</feature>
<feature type="modified residue" description="Phosphoserine" evidence="3">
    <location>
        <position position="990"/>
    </location>
</feature>
<feature type="modified residue" description="Phosphoserine" evidence="2">
    <location>
        <position position="1052"/>
    </location>
</feature>
<feature type="modified residue" description="Phosphotyrosine" evidence="2">
    <location>
        <position position="1102"/>
    </location>
</feature>
<feature type="modified residue" description="Phosphoserine" evidence="2">
    <location>
        <position position="1131"/>
    </location>
</feature>
<feature type="modified residue" description="Phosphoserine" evidence="2">
    <location>
        <position position="1143"/>
    </location>
</feature>
<sequence>MEELIWEQYTVTLQKDSKRGFGIAVSGGRDNPHFENGETSIVISDVLPGGPADGLLQENDRVVMVNGTPMEDVLHSFAVQQLRKSGKIAAIVVKRPRKVQLAPPQGSLPVDEDDRAFEVMDEFDGRSARSGYSERSRRSSHGGRSRSWEDSPERGRPHERAWSQERERSRGRSLERGLDHDDDYRRPRERSRGRSLERGLDHDDDYGRPGERSHGMSTDRGYDRGYDRGYDRGYDRTYSPEAEYGRRTQPDARHAGSRSRSREHLRSRSPSPELRGRPDHAGQPDSDRPIGVLLMKSKANEEYGLRLGSQIFIKQMTRTALATKDGNLHEGDIILKINGTVTENMSLTDARKLIEKSRGKLQLVVLRDSKQTLINIPSLNDSDSEIEDISEIESNRSFSPEERRQQYSDYDYHSSNEKLKERPNSREDMQNRWSRMGATPTPFKSMGDIASVVGTENSKEPRYQEEPPAPQPKAAPRTFLRPSPEDEAIYGPNTKMVRFKKGDSVGLRLAGGNDVGIFVAGIQEGTSAEQEGLQEGDQILKVNTQDFRGLVREDAVLYLLEIPKGEMVTILAQSRADVYRDILACGRGDSFFIRSHFECEKETPQSLAFSRGEVFRVVDTLYDGKLGHWLAVRIGNELEKGLIPNKSRAEQMASVQNAQRDNAGDRADFWRMRGQRSGMKKNLRKSREDLTAAVSVSTKFPAYERVLLREAGFKRPVVLFGPIADIALEKLANELPDLFQTAKTEPKDAGSEKSSGVVRLNTVRQIIEQDKHALLDVTPKAVDLLNYTQWFPIVIFFNPDSRQGVKTMRQRLNPTSNKSSRKLYDQANKLKKTCAHLFTATINLNSANDSWFGSLKDTIQHQQGEAVWVSEGKMEGMDDDPEDRMSYLTAMGADYLSCDSRLISDFEDTDGEGGAYTDNELDEPAEEPLVSSITRSSEPVQHEESIRKPSPEPRAQMRRAASRDQLRDSSPPPAFKPEPPKAKTQNREESFDISRSHDYKSNPSAVAGNEVSGASTRSCPPPIAAKPSFGRSILKPSTPVPSPESEEVGEGSEEQEGAPKSVLGKVKIFEKMDHKARLQRMQELQEAQNARIEIAQKHPDIYAVPIKTHKPDPGLSQHTSSRPPEPQKGPSRLYQDPRGSYGSDAEEEEYRQQLSEHSKRGYYSQPSRYRDTEL</sequence>
<comment type="function">
    <text evidence="3">Plays a role in tight junctions and adherens junctions (By similarity). Acts as a positive regulator of RANKL-induced osteoclast differentiation, potentially via mediating downstream transcriptional activity (By similarity).</text>
</comment>
<comment type="subunit">
    <text evidence="2 3 8">Homodimer (By similarity). Interacts (via PDZ2 domain) with TJP1/ZO1 (via PDZ2 domain) (By similarity). Interacts with UBN1 (By similarity). Interacts with SCRIB (By similarity). Interacts with OCLN (By similarity). Interacts with SAFB in the nucleus (PubMed:12403786). Interacts with USP53 (via the C-terminal region) (By similarity). Interacts with claudins, including CLDN1, CLDN2, CLDN3, CLDN5 and CLDN7 (By similarity). Interacts with CLDN18 (By similarity). Interacts (via N-terminus) with CTNNA1 (By similarity).</text>
</comment>
<comment type="interaction">
    <interactant intactId="EBI-8304003">
        <id>Q95168</id>
    </interactant>
    <interactant intactId="EBI-1211920">
        <id>Q9EPK5</id>
        <label>Wwtr1</label>
    </interactant>
    <organismsDiffer>true</organismsDiffer>
    <experiments>4</experiments>
</comment>
<comment type="interaction">
    <interactant intactId="EBI-8304003">
        <id>Q95168</id>
    </interactant>
    <interactant intactId="EBI-8310421">
        <id>E3Q1N2</id>
        <label>ZASP</label>
    </interactant>
    <organismsDiffer>true</organismsDiffer>
    <experiments>5</experiments>
</comment>
<comment type="subcellular location">
    <subcellularLocation>
        <location evidence="3">Cell junction</location>
        <location evidence="3">Adherens junction</location>
    </subcellularLocation>
    <subcellularLocation>
        <location evidence="1">Cell membrane</location>
        <topology evidence="1">Peripheral membrane protein</topology>
        <orientation evidence="1">Cytoplasmic side</orientation>
    </subcellularLocation>
    <subcellularLocation>
        <location evidence="1">Nucleus</location>
    </subcellularLocation>
    <subcellularLocation>
        <location evidence="9">Cell junction</location>
        <location evidence="9">Tight junction</location>
    </subcellularLocation>
    <text evidence="1 9">Also nuclear under environmental stress conditions and in migratory endothelial cells and subconfluent epithelial cell cultures. Localizes to tight junctions during initial stages of their formation (PubMed:39112699).</text>
</comment>
<comment type="alternative products">
    <event type="alternative splicing"/>
    <isoform>
        <id>Q95168-1</id>
        <name>1</name>
        <sequence type="displayed"/>
    </isoform>
    <isoform>
        <id>Q95168-2</id>
        <name>2</name>
        <sequence type="not described"/>
    </isoform>
</comment>
<comment type="PTM">
    <text>Phosphorylated.</text>
</comment>
<comment type="similarity">
    <text evidence="11">Belongs to the MAGUK family.</text>
</comment>
<dbReference type="EMBL" id="L27152">
    <property type="protein sequence ID" value="AAC37332.1"/>
    <property type="molecule type" value="mRNA"/>
</dbReference>
<dbReference type="RefSeq" id="NP_001003204.1">
    <molecule id="Q95168-1"/>
    <property type="nucleotide sequence ID" value="NM_001003204.1"/>
</dbReference>
<dbReference type="SMR" id="Q95168"/>
<dbReference type="BioGRID" id="139773">
    <property type="interactions" value="2"/>
</dbReference>
<dbReference type="FunCoup" id="Q95168">
    <property type="interactions" value="1552"/>
</dbReference>
<dbReference type="IntAct" id="Q95168">
    <property type="interactions" value="2"/>
</dbReference>
<dbReference type="MINT" id="Q95168"/>
<dbReference type="STRING" id="9615.ENSCAFP00000041484"/>
<dbReference type="iPTMnet" id="Q95168"/>
<dbReference type="PaxDb" id="9612-ENSCAFP00000002794"/>
<dbReference type="GeneID" id="403854"/>
<dbReference type="KEGG" id="cfa:403854"/>
<dbReference type="CTD" id="9414"/>
<dbReference type="eggNOG" id="KOG3580">
    <property type="taxonomic scope" value="Eukaryota"/>
</dbReference>
<dbReference type="InParanoid" id="Q95168"/>
<dbReference type="OrthoDB" id="23424at33554"/>
<dbReference type="Proteomes" id="UP000002254">
    <property type="component" value="Unplaced"/>
</dbReference>
<dbReference type="Proteomes" id="UP000694429">
    <property type="component" value="Unplaced"/>
</dbReference>
<dbReference type="Proteomes" id="UP000694542">
    <property type="component" value="Unplaced"/>
</dbReference>
<dbReference type="Proteomes" id="UP000805418">
    <property type="component" value="Unplaced"/>
</dbReference>
<dbReference type="GO" id="GO:0005912">
    <property type="term" value="C:adherens junction"/>
    <property type="evidence" value="ECO:0007669"/>
    <property type="project" value="UniProtKB-SubCell"/>
</dbReference>
<dbReference type="GO" id="GO:0005923">
    <property type="term" value="C:bicellular tight junction"/>
    <property type="evidence" value="ECO:0000318"/>
    <property type="project" value="GO_Central"/>
</dbReference>
<dbReference type="GO" id="GO:0009986">
    <property type="term" value="C:cell surface"/>
    <property type="evidence" value="ECO:0000314"/>
    <property type="project" value="MGI"/>
</dbReference>
<dbReference type="GO" id="GO:0005634">
    <property type="term" value="C:nucleus"/>
    <property type="evidence" value="ECO:0000314"/>
    <property type="project" value="ARUK-UCL"/>
</dbReference>
<dbReference type="GO" id="GO:0005886">
    <property type="term" value="C:plasma membrane"/>
    <property type="evidence" value="ECO:0000318"/>
    <property type="project" value="GO_Central"/>
</dbReference>
<dbReference type="GO" id="GO:0050839">
    <property type="term" value="F:cell adhesion molecule binding"/>
    <property type="evidence" value="ECO:0000318"/>
    <property type="project" value="GO_Central"/>
</dbReference>
<dbReference type="GO" id="GO:0098609">
    <property type="term" value="P:cell-cell adhesion"/>
    <property type="evidence" value="ECO:0000318"/>
    <property type="project" value="GO_Central"/>
</dbReference>
<dbReference type="GO" id="GO:0045216">
    <property type="term" value="P:cell-cell junction organization"/>
    <property type="evidence" value="ECO:0000318"/>
    <property type="project" value="GO_Central"/>
</dbReference>
<dbReference type="GO" id="GO:0090557">
    <property type="term" value="P:establishment of endothelial intestinal barrier"/>
    <property type="evidence" value="ECO:0000318"/>
    <property type="project" value="GO_Central"/>
</dbReference>
<dbReference type="GO" id="GO:1905605">
    <property type="term" value="P:positive regulation of blood-brain barrier permeability"/>
    <property type="evidence" value="ECO:0000318"/>
    <property type="project" value="GO_Central"/>
</dbReference>
<dbReference type="GO" id="GO:0150105">
    <property type="term" value="P:protein localization to cell-cell junction"/>
    <property type="evidence" value="ECO:0000318"/>
    <property type="project" value="GO_Central"/>
</dbReference>
<dbReference type="CDD" id="cd06727">
    <property type="entry name" value="PDZ1_ZO1-like"/>
    <property type="match status" value="1"/>
</dbReference>
<dbReference type="CDD" id="cd06728">
    <property type="entry name" value="PDZ2_ZO1-like_ds"/>
    <property type="match status" value="1"/>
</dbReference>
<dbReference type="CDD" id="cd06729">
    <property type="entry name" value="PDZ3_ZO1-like_domain"/>
    <property type="match status" value="1"/>
</dbReference>
<dbReference type="CDD" id="cd12027">
    <property type="entry name" value="SH3_ZO-2"/>
    <property type="match status" value="1"/>
</dbReference>
<dbReference type="FunFam" id="2.30.42.10:FF:000009">
    <property type="entry name" value="Putative tight junction protein ZO-1"/>
    <property type="match status" value="1"/>
</dbReference>
<dbReference type="FunFam" id="2.30.42.10:FF:000013">
    <property type="entry name" value="Putative tight junction protein ZO-1"/>
    <property type="match status" value="1"/>
</dbReference>
<dbReference type="FunFam" id="3.40.50.300:FF:000110">
    <property type="entry name" value="tight junction protein ZO-1 isoform X1"/>
    <property type="match status" value="1"/>
</dbReference>
<dbReference type="FunFam" id="2.30.30.40:FF:000081">
    <property type="entry name" value="Tight junction protein ZO-2 isoform 2"/>
    <property type="match status" value="1"/>
</dbReference>
<dbReference type="FunFam" id="2.30.42.10:FF:000075">
    <property type="entry name" value="Tight junction protein ZO-2 isoform 2"/>
    <property type="match status" value="1"/>
</dbReference>
<dbReference type="Gene3D" id="2.30.42.10">
    <property type="match status" value="3"/>
</dbReference>
<dbReference type="Gene3D" id="3.40.50.300">
    <property type="entry name" value="P-loop containing nucleotide triphosphate hydrolases"/>
    <property type="match status" value="1"/>
</dbReference>
<dbReference type="Gene3D" id="2.30.30.40">
    <property type="entry name" value="SH3 Domains"/>
    <property type="match status" value="1"/>
</dbReference>
<dbReference type="InterPro" id="IPR008145">
    <property type="entry name" value="GK/Ca_channel_bsu"/>
</dbReference>
<dbReference type="InterPro" id="IPR008144">
    <property type="entry name" value="Guanylate_kin-like_dom"/>
</dbReference>
<dbReference type="InterPro" id="IPR027417">
    <property type="entry name" value="P-loop_NTPase"/>
</dbReference>
<dbReference type="InterPro" id="IPR001478">
    <property type="entry name" value="PDZ"/>
</dbReference>
<dbReference type="InterPro" id="IPR036034">
    <property type="entry name" value="PDZ_sf"/>
</dbReference>
<dbReference type="InterPro" id="IPR036028">
    <property type="entry name" value="SH3-like_dom_sf"/>
</dbReference>
<dbReference type="InterPro" id="IPR001452">
    <property type="entry name" value="SH3_domain"/>
</dbReference>
<dbReference type="InterPro" id="IPR005417">
    <property type="entry name" value="ZO"/>
</dbReference>
<dbReference type="InterPro" id="IPR005419">
    <property type="entry name" value="ZO-2"/>
</dbReference>
<dbReference type="InterPro" id="IPR035598">
    <property type="entry name" value="ZO-2_SH3"/>
</dbReference>
<dbReference type="PANTHER" id="PTHR13865">
    <property type="entry name" value="TIGHT JUNCTION PROTEIN"/>
    <property type="match status" value="1"/>
</dbReference>
<dbReference type="PANTHER" id="PTHR13865:SF26">
    <property type="entry name" value="TIGHT JUNCTION PROTEIN ZO-2"/>
    <property type="match status" value="1"/>
</dbReference>
<dbReference type="Pfam" id="PF00625">
    <property type="entry name" value="Guanylate_kin"/>
    <property type="match status" value="1"/>
</dbReference>
<dbReference type="Pfam" id="PF00595">
    <property type="entry name" value="PDZ"/>
    <property type="match status" value="3"/>
</dbReference>
<dbReference type="Pfam" id="PF07653">
    <property type="entry name" value="SH3_2"/>
    <property type="match status" value="1"/>
</dbReference>
<dbReference type="PRINTS" id="PR01597">
    <property type="entry name" value="ZONOCCLUDNS"/>
</dbReference>
<dbReference type="PRINTS" id="PR01599">
    <property type="entry name" value="ZONOCCLUDNS2"/>
</dbReference>
<dbReference type="SMART" id="SM00072">
    <property type="entry name" value="GuKc"/>
    <property type="match status" value="1"/>
</dbReference>
<dbReference type="SMART" id="SM00228">
    <property type="entry name" value="PDZ"/>
    <property type="match status" value="3"/>
</dbReference>
<dbReference type="SUPFAM" id="SSF52540">
    <property type="entry name" value="P-loop containing nucleoside triphosphate hydrolases"/>
    <property type="match status" value="1"/>
</dbReference>
<dbReference type="SUPFAM" id="SSF50156">
    <property type="entry name" value="PDZ domain-like"/>
    <property type="match status" value="3"/>
</dbReference>
<dbReference type="SUPFAM" id="SSF50044">
    <property type="entry name" value="SH3-domain"/>
    <property type="match status" value="1"/>
</dbReference>
<dbReference type="PROSITE" id="PS50052">
    <property type="entry name" value="GUANYLATE_KINASE_2"/>
    <property type="match status" value="1"/>
</dbReference>
<dbReference type="PROSITE" id="PS50106">
    <property type="entry name" value="PDZ"/>
    <property type="match status" value="3"/>
</dbReference>
<dbReference type="PROSITE" id="PS50002">
    <property type="entry name" value="SH3"/>
    <property type="match status" value="1"/>
</dbReference>
<reference key="1">
    <citation type="journal article" date="1996" name="J. Biol. Chem.">
        <title>The tight junction protein ZO-2 contains three PDZ (PSD-95/Discs-Large/ZO-1) domains and an alternatively spliced region.</title>
        <authorList>
            <person name="Beatch M."/>
            <person name="Jesaitis L.A."/>
            <person name="Gallin W."/>
            <person name="Goodenough D.A."/>
            <person name="Stevenson B.R."/>
        </authorList>
    </citation>
    <scope>NUCLEOTIDE SEQUENCE [MRNA]</scope>
    <source>
        <strain>Cocker spaniel</strain>
        <tissue>Kidney</tissue>
    </source>
</reference>
<reference key="2">
    <citation type="journal article" date="1994" name="J. Cell Biol.">
        <title>Molecular characterization and tissue distribution of ZO-2, a tight junction protein homologous to ZO-1 and the Drosophila discs-large tumor suppressor protein.</title>
        <authorList>
            <person name="Jesaitis L.A."/>
            <person name="Goodenough D.A."/>
        </authorList>
    </citation>
    <scope>PARTIAL NUCLEOTIDE SEQUENCE [MRNA]</scope>
    <source>
        <strain>Cocker spaniel</strain>
        <tissue>Kidney</tissue>
    </source>
</reference>
<reference key="3">
    <citation type="journal article" date="2003" name="J. Biol. Chem.">
        <title>The tight junction protein ZO-2 localizes to the nucleus and interacts with the heterogeneous nuclear ribonucleoprotein scaffold attachment factor-B.</title>
        <authorList>
            <person name="Traweger A."/>
            <person name="Fuchs R."/>
            <person name="Krizbai I.A."/>
            <person name="Weiger T.M."/>
            <person name="Bauer H.-C."/>
            <person name="Bauer H."/>
        </authorList>
    </citation>
    <scope>SUBCELLULAR LOCATION</scope>
    <scope>INTERACTION WITH SAFB</scope>
</reference>
<reference key="4">
    <citation type="journal article" date="2024" name="Nature">
        <title>Membrane prewetting by condensates promotes tight-junction belt formation.</title>
        <authorList>
            <person name="Pombo-Garcia K."/>
            <person name="Adame-Arana O."/>
            <person name="Martin-Lemaitre C."/>
            <person name="Juelicher F."/>
            <person name="Honigmann A."/>
        </authorList>
    </citation>
    <scope>SUBCELLULAR LOCATION</scope>
</reference>
<name>ZO2_CANLF</name>